<organism>
    <name type="scientific">Burkholderia pseudomallei (strain K96243)</name>
    <dbReference type="NCBI Taxonomy" id="272560"/>
    <lineage>
        <taxon>Bacteria</taxon>
        <taxon>Pseudomonadati</taxon>
        <taxon>Pseudomonadota</taxon>
        <taxon>Betaproteobacteria</taxon>
        <taxon>Burkholderiales</taxon>
        <taxon>Burkholderiaceae</taxon>
        <taxon>Burkholderia</taxon>
        <taxon>pseudomallei group</taxon>
    </lineage>
</organism>
<protein>
    <recommendedName>
        <fullName evidence="1">2,3,4,5-tetrahydropyridine-2,6-dicarboxylate N-succinyltransferase</fullName>
        <ecNumber evidence="1">2.3.1.117</ecNumber>
    </recommendedName>
    <alternativeName>
        <fullName evidence="1">Tetrahydrodipicolinate N-succinyltransferase</fullName>
        <shortName evidence="1">THDP succinyltransferase</shortName>
        <shortName evidence="1">THP succinyltransferase</shortName>
        <shortName evidence="1">Tetrahydropicolinate succinylase</shortName>
    </alternativeName>
</protein>
<dbReference type="EC" id="2.3.1.117" evidence="1"/>
<dbReference type="EMBL" id="BX571965">
    <property type="protein sequence ID" value="CAH36171.1"/>
    <property type="molecule type" value="Genomic_DNA"/>
</dbReference>
<dbReference type="RefSeq" id="WP_004191680.1">
    <property type="nucleotide sequence ID" value="NZ_CP009538.1"/>
</dbReference>
<dbReference type="RefSeq" id="YP_108764.1">
    <property type="nucleotide sequence ID" value="NC_006350.1"/>
</dbReference>
<dbReference type="SMR" id="Q63T02"/>
<dbReference type="STRING" id="272560.BPSL2169"/>
<dbReference type="GeneID" id="92979291"/>
<dbReference type="KEGG" id="bps:BPSL2169"/>
<dbReference type="PATRIC" id="fig|272560.51.peg.3281"/>
<dbReference type="eggNOG" id="COG2171">
    <property type="taxonomic scope" value="Bacteria"/>
</dbReference>
<dbReference type="UniPathway" id="UPA00034">
    <property type="reaction ID" value="UER00019"/>
</dbReference>
<dbReference type="Proteomes" id="UP000000605">
    <property type="component" value="Chromosome 1"/>
</dbReference>
<dbReference type="GO" id="GO:0005737">
    <property type="term" value="C:cytoplasm"/>
    <property type="evidence" value="ECO:0007669"/>
    <property type="project" value="UniProtKB-SubCell"/>
</dbReference>
<dbReference type="GO" id="GO:0008666">
    <property type="term" value="F:2,3,4,5-tetrahydropyridine-2,6-dicarboxylate N-succinyltransferase activity"/>
    <property type="evidence" value="ECO:0007669"/>
    <property type="project" value="UniProtKB-UniRule"/>
</dbReference>
<dbReference type="GO" id="GO:0016779">
    <property type="term" value="F:nucleotidyltransferase activity"/>
    <property type="evidence" value="ECO:0007669"/>
    <property type="project" value="TreeGrafter"/>
</dbReference>
<dbReference type="GO" id="GO:0019877">
    <property type="term" value="P:diaminopimelate biosynthetic process"/>
    <property type="evidence" value="ECO:0007669"/>
    <property type="project" value="UniProtKB-UniRule"/>
</dbReference>
<dbReference type="GO" id="GO:0009089">
    <property type="term" value="P:lysine biosynthetic process via diaminopimelate"/>
    <property type="evidence" value="ECO:0007669"/>
    <property type="project" value="UniProtKB-UniRule"/>
</dbReference>
<dbReference type="CDD" id="cd03350">
    <property type="entry name" value="LbH_THP_succinylT"/>
    <property type="match status" value="1"/>
</dbReference>
<dbReference type="Gene3D" id="2.160.10.10">
    <property type="entry name" value="Hexapeptide repeat proteins"/>
    <property type="match status" value="1"/>
</dbReference>
<dbReference type="Gene3D" id="1.10.166.10">
    <property type="entry name" value="Tetrahydrodipicolinate-N-succinyltransferase, N-terminal domain"/>
    <property type="match status" value="1"/>
</dbReference>
<dbReference type="HAMAP" id="MF_00811">
    <property type="entry name" value="DapD"/>
    <property type="match status" value="1"/>
</dbReference>
<dbReference type="InterPro" id="IPR005664">
    <property type="entry name" value="DapD_Trfase_Hexpep_rpt_fam"/>
</dbReference>
<dbReference type="InterPro" id="IPR001451">
    <property type="entry name" value="Hexapep"/>
</dbReference>
<dbReference type="InterPro" id="IPR018357">
    <property type="entry name" value="Hexapep_transf_CS"/>
</dbReference>
<dbReference type="InterPro" id="IPR023180">
    <property type="entry name" value="THP_succinylTrfase_dom1"/>
</dbReference>
<dbReference type="InterPro" id="IPR037133">
    <property type="entry name" value="THP_succinylTrfase_N_sf"/>
</dbReference>
<dbReference type="InterPro" id="IPR011004">
    <property type="entry name" value="Trimer_LpxA-like_sf"/>
</dbReference>
<dbReference type="NCBIfam" id="TIGR00965">
    <property type="entry name" value="dapD"/>
    <property type="match status" value="1"/>
</dbReference>
<dbReference type="NCBIfam" id="NF008808">
    <property type="entry name" value="PRK11830.1"/>
    <property type="match status" value="1"/>
</dbReference>
<dbReference type="PANTHER" id="PTHR19136:SF52">
    <property type="entry name" value="2,3,4,5-TETRAHYDROPYRIDINE-2,6-DICARBOXYLATE N-SUCCINYLTRANSFERASE"/>
    <property type="match status" value="1"/>
</dbReference>
<dbReference type="PANTHER" id="PTHR19136">
    <property type="entry name" value="MOLYBDENUM COFACTOR GUANYLYLTRANSFERASE"/>
    <property type="match status" value="1"/>
</dbReference>
<dbReference type="Pfam" id="PF14602">
    <property type="entry name" value="Hexapep_2"/>
    <property type="match status" value="1"/>
</dbReference>
<dbReference type="Pfam" id="PF14805">
    <property type="entry name" value="THDPS_N_2"/>
    <property type="match status" value="1"/>
</dbReference>
<dbReference type="SUPFAM" id="SSF51161">
    <property type="entry name" value="Trimeric LpxA-like enzymes"/>
    <property type="match status" value="1"/>
</dbReference>
<dbReference type="PROSITE" id="PS00101">
    <property type="entry name" value="HEXAPEP_TRANSFERASES"/>
    <property type="match status" value="1"/>
</dbReference>
<name>DAPD_BURPS</name>
<accession>Q63T02</accession>
<gene>
    <name evidence="1" type="primary">dapD</name>
    <name type="ordered locus">BPSL2169</name>
</gene>
<keyword id="KW-0012">Acyltransferase</keyword>
<keyword id="KW-0028">Amino-acid biosynthesis</keyword>
<keyword id="KW-0963">Cytoplasm</keyword>
<keyword id="KW-0220">Diaminopimelate biosynthesis</keyword>
<keyword id="KW-0457">Lysine biosynthesis</keyword>
<keyword id="KW-1185">Reference proteome</keyword>
<keyword id="KW-0677">Repeat</keyword>
<keyword id="KW-0808">Transferase</keyword>
<evidence type="ECO:0000255" key="1">
    <source>
        <dbReference type="HAMAP-Rule" id="MF_00811"/>
    </source>
</evidence>
<sequence>MSQQLQQIIDNAWENRAELSPKAASAEIREAVAHAIEQLDRGALRVAEKIDGAWTVHQWLKKAVLLSFRLEDNAPMPAGGYSQFYDKVPSKFANYTAEDFAAGGFRVVPPAIARRGSFIAKNVVLMPSYTNIGAYVDEGTMVDTWATVGSCAQIGKNVHLSGGVGIGGVLEPLQANPVIIEDNCFIGARSEVVEGVIVEENSVISMGVYLGQSTKIYDRETGEVTYGRIPAGSVVVAGNLPAKDGTHSLYCAVIVKKVDAKTRAKVGLNELLRGD</sequence>
<feature type="chain" id="PRO_0000196927" description="2,3,4,5-tetrahydropyridine-2,6-dicarboxylate N-succinyltransferase">
    <location>
        <begin position="1"/>
        <end position="275"/>
    </location>
</feature>
<feature type="binding site" evidence="1">
    <location>
        <position position="106"/>
    </location>
    <ligand>
        <name>substrate</name>
    </ligand>
</feature>
<feature type="binding site" evidence="1">
    <location>
        <position position="143"/>
    </location>
    <ligand>
        <name>substrate</name>
    </ligand>
</feature>
<reference key="1">
    <citation type="journal article" date="2004" name="Proc. Natl. Acad. Sci. U.S.A.">
        <title>Genomic plasticity of the causative agent of melioidosis, Burkholderia pseudomallei.</title>
        <authorList>
            <person name="Holden M.T.G."/>
            <person name="Titball R.W."/>
            <person name="Peacock S.J."/>
            <person name="Cerdeno-Tarraga A.-M."/>
            <person name="Atkins T."/>
            <person name="Crossman L.C."/>
            <person name="Pitt T."/>
            <person name="Churcher C."/>
            <person name="Mungall K.L."/>
            <person name="Bentley S.D."/>
            <person name="Sebaihia M."/>
            <person name="Thomson N.R."/>
            <person name="Bason N."/>
            <person name="Beacham I.R."/>
            <person name="Brooks K."/>
            <person name="Brown K.A."/>
            <person name="Brown N.F."/>
            <person name="Challis G.L."/>
            <person name="Cherevach I."/>
            <person name="Chillingworth T."/>
            <person name="Cronin A."/>
            <person name="Crossett B."/>
            <person name="Davis P."/>
            <person name="DeShazer D."/>
            <person name="Feltwell T."/>
            <person name="Fraser A."/>
            <person name="Hance Z."/>
            <person name="Hauser H."/>
            <person name="Holroyd S."/>
            <person name="Jagels K."/>
            <person name="Keith K.E."/>
            <person name="Maddison M."/>
            <person name="Moule S."/>
            <person name="Price C."/>
            <person name="Quail M.A."/>
            <person name="Rabbinowitsch E."/>
            <person name="Rutherford K."/>
            <person name="Sanders M."/>
            <person name="Simmonds M."/>
            <person name="Songsivilai S."/>
            <person name="Stevens K."/>
            <person name="Tumapa S."/>
            <person name="Vesaratchavest M."/>
            <person name="Whitehead S."/>
            <person name="Yeats C."/>
            <person name="Barrell B.G."/>
            <person name="Oyston P.C.F."/>
            <person name="Parkhill J."/>
        </authorList>
    </citation>
    <scope>NUCLEOTIDE SEQUENCE [LARGE SCALE GENOMIC DNA]</scope>
    <source>
        <strain>K96243</strain>
    </source>
</reference>
<comment type="catalytic activity">
    <reaction evidence="1">
        <text>(S)-2,3,4,5-tetrahydrodipicolinate + succinyl-CoA + H2O = (S)-2-succinylamino-6-oxoheptanedioate + CoA</text>
        <dbReference type="Rhea" id="RHEA:17325"/>
        <dbReference type="ChEBI" id="CHEBI:15377"/>
        <dbReference type="ChEBI" id="CHEBI:15685"/>
        <dbReference type="ChEBI" id="CHEBI:16845"/>
        <dbReference type="ChEBI" id="CHEBI:57287"/>
        <dbReference type="ChEBI" id="CHEBI:57292"/>
        <dbReference type="EC" id="2.3.1.117"/>
    </reaction>
</comment>
<comment type="pathway">
    <text evidence="1">Amino-acid biosynthesis; L-lysine biosynthesis via DAP pathway; LL-2,6-diaminopimelate from (S)-tetrahydrodipicolinate (succinylase route): step 1/3.</text>
</comment>
<comment type="subunit">
    <text evidence="1">Homotrimer.</text>
</comment>
<comment type="subcellular location">
    <subcellularLocation>
        <location evidence="1">Cytoplasm</location>
    </subcellularLocation>
</comment>
<comment type="similarity">
    <text evidence="1">Belongs to the transferase hexapeptide repeat family.</text>
</comment>
<proteinExistence type="inferred from homology"/>